<feature type="chain" id="PRO_0000116617" description="Uncharacterized protein C17C9.11c">
    <location>
        <begin position="1"/>
        <end position="240"/>
    </location>
</feature>
<feature type="zinc finger region" description="C2H2-type">
    <location>
        <begin position="3"/>
        <end position="27"/>
    </location>
</feature>
<feature type="region of interest" description="Disordered" evidence="1">
    <location>
        <begin position="21"/>
        <end position="43"/>
    </location>
</feature>
<feature type="region of interest" description="Disordered" evidence="1">
    <location>
        <begin position="120"/>
        <end position="171"/>
    </location>
</feature>
<feature type="compositionally biased region" description="Basic and acidic residues" evidence="1">
    <location>
        <begin position="120"/>
        <end position="136"/>
    </location>
</feature>
<feature type="compositionally biased region" description="Low complexity" evidence="1">
    <location>
        <begin position="155"/>
        <end position="166"/>
    </location>
</feature>
<accession>Q10483</accession>
<dbReference type="EMBL" id="CU329670">
    <property type="protein sequence ID" value="CAA97342.2"/>
    <property type="molecule type" value="Genomic_DNA"/>
</dbReference>
<dbReference type="RefSeq" id="NP_594595.1">
    <property type="nucleotide sequence ID" value="NM_001020023.2"/>
</dbReference>
<dbReference type="SMR" id="Q10483"/>
<dbReference type="BioGRID" id="278642">
    <property type="interactions" value="9"/>
</dbReference>
<dbReference type="FunCoup" id="Q10483">
    <property type="interactions" value="202"/>
</dbReference>
<dbReference type="STRING" id="284812.Q10483"/>
<dbReference type="iPTMnet" id="Q10483"/>
<dbReference type="PaxDb" id="4896-SPAC17C9.11c.1"/>
<dbReference type="EnsemblFungi" id="SPAC17C9.11c.1">
    <property type="protein sequence ID" value="SPAC17C9.11c.1:pep"/>
    <property type="gene ID" value="SPAC17C9.11c"/>
</dbReference>
<dbReference type="KEGG" id="spo:2542167"/>
<dbReference type="PomBase" id="SPAC17C9.11c"/>
<dbReference type="VEuPathDB" id="FungiDB:SPAC17C9.11c"/>
<dbReference type="eggNOG" id="KOG2689">
    <property type="taxonomic scope" value="Eukaryota"/>
</dbReference>
<dbReference type="HOGENOM" id="CLU_047594_0_0_1"/>
<dbReference type="InParanoid" id="Q10483"/>
<dbReference type="OMA" id="AQHFPRK"/>
<dbReference type="PhylomeDB" id="Q10483"/>
<dbReference type="PRO" id="PR:Q10483"/>
<dbReference type="Proteomes" id="UP000002485">
    <property type="component" value="Chromosome I"/>
</dbReference>
<dbReference type="GO" id="GO:0005737">
    <property type="term" value="C:cytoplasm"/>
    <property type="evidence" value="ECO:0000318"/>
    <property type="project" value="GO_Central"/>
</dbReference>
<dbReference type="GO" id="GO:0005829">
    <property type="term" value="C:cytosol"/>
    <property type="evidence" value="ECO:0007005"/>
    <property type="project" value="PomBase"/>
</dbReference>
<dbReference type="GO" id="GO:0005634">
    <property type="term" value="C:nucleus"/>
    <property type="evidence" value="ECO:0007005"/>
    <property type="project" value="PomBase"/>
</dbReference>
<dbReference type="GO" id="GO:0036435">
    <property type="term" value="F:K48-linked polyubiquitin modification-dependent protein binding"/>
    <property type="evidence" value="ECO:0000318"/>
    <property type="project" value="GO_Central"/>
</dbReference>
<dbReference type="GO" id="GO:0008270">
    <property type="term" value="F:zinc ion binding"/>
    <property type="evidence" value="ECO:0007669"/>
    <property type="project" value="UniProtKB-KW"/>
</dbReference>
<dbReference type="GO" id="GO:0032435">
    <property type="term" value="P:negative regulation of proteasomal ubiquitin-dependent protein catabolic process"/>
    <property type="evidence" value="ECO:0000318"/>
    <property type="project" value="GO_Central"/>
</dbReference>
<dbReference type="GO" id="GO:1903094">
    <property type="term" value="P:negative regulation of protein K48-linked deubiquitination"/>
    <property type="evidence" value="ECO:0000318"/>
    <property type="project" value="GO_Central"/>
</dbReference>
<dbReference type="GO" id="GO:0031397">
    <property type="term" value="P:negative regulation of protein ubiquitination"/>
    <property type="evidence" value="ECO:0000318"/>
    <property type="project" value="GO_Central"/>
</dbReference>
<dbReference type="CDD" id="cd01767">
    <property type="entry name" value="UBX"/>
    <property type="match status" value="1"/>
</dbReference>
<dbReference type="Gene3D" id="3.10.20.90">
    <property type="entry name" value="Phosphatidylinositol 3-kinase Catalytic Subunit, Chain A, domain 1"/>
    <property type="match status" value="1"/>
</dbReference>
<dbReference type="InterPro" id="IPR029071">
    <property type="entry name" value="Ubiquitin-like_domsf"/>
</dbReference>
<dbReference type="PANTHER" id="PTHR46340">
    <property type="entry name" value="UBX DOMAIN-CONTAINING PROTEIN 1"/>
    <property type="match status" value="1"/>
</dbReference>
<dbReference type="PANTHER" id="PTHR46340:SF1">
    <property type="entry name" value="UBX DOMAIN-CONTAINING PROTEIN 1"/>
    <property type="match status" value="1"/>
</dbReference>
<dbReference type="SUPFAM" id="SSF54236">
    <property type="entry name" value="Ubiquitin-like"/>
    <property type="match status" value="1"/>
</dbReference>
<dbReference type="PROSITE" id="PS00028">
    <property type="entry name" value="ZINC_FINGER_C2H2_1"/>
    <property type="match status" value="1"/>
</dbReference>
<proteinExistence type="predicted"/>
<keyword id="KW-0479">Metal-binding</keyword>
<keyword id="KW-1185">Reference proteome</keyword>
<keyword id="KW-0862">Zinc</keyword>
<keyword id="KW-0863">Zinc-finger</keyword>
<protein>
    <recommendedName>
        <fullName>Uncharacterized protein C17C9.11c</fullName>
    </recommendedName>
</protein>
<sequence length="240" mass="27602">MVLKCLECDKLLSSIEMAEFHSTKTSHDQFEETEEEIKKRSPEELKQAIEALREKAKEKKEKERILALEEKKTNYKILQKSNDETAQAMRKMQDQARLRDLQKIRQQKAEDAEQRKKILAEIERDKKRRAAERENKNSSVKETAAPIKQPKNANSSSTCTRTPPTSGRFSIRHDGQVCNITIAAEETLRQLAQQVAEKMNVSPPTKFTTTFPRASYGTDVFDKPVNQLDLFPSAVLIPQW</sequence>
<name>YDFB_SCHPO</name>
<evidence type="ECO:0000256" key="1">
    <source>
        <dbReference type="SAM" id="MobiDB-lite"/>
    </source>
</evidence>
<reference key="1">
    <citation type="journal article" date="2002" name="Nature">
        <title>The genome sequence of Schizosaccharomyces pombe.</title>
        <authorList>
            <person name="Wood V."/>
            <person name="Gwilliam R."/>
            <person name="Rajandream M.A."/>
            <person name="Lyne M.H."/>
            <person name="Lyne R."/>
            <person name="Stewart A."/>
            <person name="Sgouros J.G."/>
            <person name="Peat N."/>
            <person name="Hayles J."/>
            <person name="Baker S.G."/>
            <person name="Basham D."/>
            <person name="Bowman S."/>
            <person name="Brooks K."/>
            <person name="Brown D."/>
            <person name="Brown S."/>
            <person name="Chillingworth T."/>
            <person name="Churcher C.M."/>
            <person name="Collins M."/>
            <person name="Connor R."/>
            <person name="Cronin A."/>
            <person name="Davis P."/>
            <person name="Feltwell T."/>
            <person name="Fraser A."/>
            <person name="Gentles S."/>
            <person name="Goble A."/>
            <person name="Hamlin N."/>
            <person name="Harris D.E."/>
            <person name="Hidalgo J."/>
            <person name="Hodgson G."/>
            <person name="Holroyd S."/>
            <person name="Hornsby T."/>
            <person name="Howarth S."/>
            <person name="Huckle E.J."/>
            <person name="Hunt S."/>
            <person name="Jagels K."/>
            <person name="James K.D."/>
            <person name="Jones L."/>
            <person name="Jones M."/>
            <person name="Leather S."/>
            <person name="McDonald S."/>
            <person name="McLean J."/>
            <person name="Mooney P."/>
            <person name="Moule S."/>
            <person name="Mungall K.L."/>
            <person name="Murphy L.D."/>
            <person name="Niblett D."/>
            <person name="Odell C."/>
            <person name="Oliver K."/>
            <person name="O'Neil S."/>
            <person name="Pearson D."/>
            <person name="Quail M.A."/>
            <person name="Rabbinowitsch E."/>
            <person name="Rutherford K.M."/>
            <person name="Rutter S."/>
            <person name="Saunders D."/>
            <person name="Seeger K."/>
            <person name="Sharp S."/>
            <person name="Skelton J."/>
            <person name="Simmonds M.N."/>
            <person name="Squares R."/>
            <person name="Squares S."/>
            <person name="Stevens K."/>
            <person name="Taylor K."/>
            <person name="Taylor R.G."/>
            <person name="Tivey A."/>
            <person name="Walsh S.V."/>
            <person name="Warren T."/>
            <person name="Whitehead S."/>
            <person name="Woodward J.R."/>
            <person name="Volckaert G."/>
            <person name="Aert R."/>
            <person name="Robben J."/>
            <person name="Grymonprez B."/>
            <person name="Weltjens I."/>
            <person name="Vanstreels E."/>
            <person name="Rieger M."/>
            <person name="Schaefer M."/>
            <person name="Mueller-Auer S."/>
            <person name="Gabel C."/>
            <person name="Fuchs M."/>
            <person name="Duesterhoeft A."/>
            <person name="Fritzc C."/>
            <person name="Holzer E."/>
            <person name="Moestl D."/>
            <person name="Hilbert H."/>
            <person name="Borzym K."/>
            <person name="Langer I."/>
            <person name="Beck A."/>
            <person name="Lehrach H."/>
            <person name="Reinhardt R."/>
            <person name="Pohl T.M."/>
            <person name="Eger P."/>
            <person name="Zimmermann W."/>
            <person name="Wedler H."/>
            <person name="Wambutt R."/>
            <person name="Purnelle B."/>
            <person name="Goffeau A."/>
            <person name="Cadieu E."/>
            <person name="Dreano S."/>
            <person name="Gloux S."/>
            <person name="Lelaure V."/>
            <person name="Mottier S."/>
            <person name="Galibert F."/>
            <person name="Aves S.J."/>
            <person name="Xiang Z."/>
            <person name="Hunt C."/>
            <person name="Moore K."/>
            <person name="Hurst S.M."/>
            <person name="Lucas M."/>
            <person name="Rochet M."/>
            <person name="Gaillardin C."/>
            <person name="Tallada V.A."/>
            <person name="Garzon A."/>
            <person name="Thode G."/>
            <person name="Daga R.R."/>
            <person name="Cruzado L."/>
            <person name="Jimenez J."/>
            <person name="Sanchez M."/>
            <person name="del Rey F."/>
            <person name="Benito J."/>
            <person name="Dominguez A."/>
            <person name="Revuelta J.L."/>
            <person name="Moreno S."/>
            <person name="Armstrong J."/>
            <person name="Forsburg S.L."/>
            <person name="Cerutti L."/>
            <person name="Lowe T."/>
            <person name="McCombie W.R."/>
            <person name="Paulsen I."/>
            <person name="Potashkin J."/>
            <person name="Shpakovski G.V."/>
            <person name="Ussery D."/>
            <person name="Barrell B.G."/>
            <person name="Nurse P."/>
        </authorList>
    </citation>
    <scope>NUCLEOTIDE SEQUENCE [LARGE SCALE GENOMIC DNA]</scope>
    <source>
        <strain>972 / ATCC 24843</strain>
    </source>
</reference>
<organism>
    <name type="scientific">Schizosaccharomyces pombe (strain 972 / ATCC 24843)</name>
    <name type="common">Fission yeast</name>
    <dbReference type="NCBI Taxonomy" id="284812"/>
    <lineage>
        <taxon>Eukaryota</taxon>
        <taxon>Fungi</taxon>
        <taxon>Dikarya</taxon>
        <taxon>Ascomycota</taxon>
        <taxon>Taphrinomycotina</taxon>
        <taxon>Schizosaccharomycetes</taxon>
        <taxon>Schizosaccharomycetales</taxon>
        <taxon>Schizosaccharomycetaceae</taxon>
        <taxon>Schizosaccharomyces</taxon>
    </lineage>
</organism>
<gene>
    <name type="ORF">SPAC17C9.11c</name>
</gene>